<sequence>MKLKGKGVGKNIVEGEVIVSKKPLSFLGGVDPETGIIIDPDSDIKGESIEGKILVFPKGRGSTVGSYVIYALSRNGKAPKAIIVEEAEPIVTVGAIISGIPLIAGVDISKLRTGMKVRINPRTGEVEIIG</sequence>
<proteinExistence type="inferred from homology"/>
<protein>
    <recommendedName>
        <fullName evidence="1">Phosphomevalonate dehydratase small subunit</fullName>
        <shortName evidence="1">PMDh small subunit</shortName>
        <shortName evidence="1">PMDh-S</shortName>
        <ecNumber evidence="1">4.2.1.182</ecNumber>
    </recommendedName>
</protein>
<dbReference type="EC" id="4.2.1.182" evidence="1"/>
<dbReference type="EMBL" id="AJ248288">
    <property type="protein sequence ID" value="CAB50519.1"/>
    <property type="molecule type" value="Genomic_DNA"/>
</dbReference>
<dbReference type="EMBL" id="HE613800">
    <property type="protein sequence ID" value="CCE71076.1"/>
    <property type="molecule type" value="Genomic_DNA"/>
</dbReference>
<dbReference type="PIR" id="A75010">
    <property type="entry name" value="A75010"/>
</dbReference>
<dbReference type="RefSeq" id="WP_010868733.1">
    <property type="nucleotide sequence ID" value="NC_000868.1"/>
</dbReference>
<dbReference type="SMR" id="Q9UY93"/>
<dbReference type="STRING" id="272844.PAB1062"/>
<dbReference type="KEGG" id="pab:PAB1062"/>
<dbReference type="PATRIC" id="fig|272844.11.peg.1725"/>
<dbReference type="eggNOG" id="arCOG04279">
    <property type="taxonomic scope" value="Archaea"/>
</dbReference>
<dbReference type="HOGENOM" id="CLU_141583_2_0_2"/>
<dbReference type="OrthoDB" id="18062at2157"/>
<dbReference type="PhylomeDB" id="Q9UY93"/>
<dbReference type="UniPathway" id="UPA00057"/>
<dbReference type="Proteomes" id="UP000000810">
    <property type="component" value="Chromosome"/>
</dbReference>
<dbReference type="Proteomes" id="UP000009139">
    <property type="component" value="Chromosome"/>
</dbReference>
<dbReference type="GO" id="GO:0016836">
    <property type="term" value="F:hydro-lyase activity"/>
    <property type="evidence" value="ECO:0007669"/>
    <property type="project" value="UniProtKB-UniRule"/>
</dbReference>
<dbReference type="GO" id="GO:0019287">
    <property type="term" value="P:isopentenyl diphosphate biosynthetic process, mevalonate pathway"/>
    <property type="evidence" value="ECO:0007669"/>
    <property type="project" value="UniProtKB-UniRule"/>
</dbReference>
<dbReference type="CDD" id="cd01356">
    <property type="entry name" value="AcnX_swivel"/>
    <property type="match status" value="1"/>
</dbReference>
<dbReference type="Gene3D" id="3.50.30.10">
    <property type="entry name" value="Phosphohistidine domain"/>
    <property type="match status" value="1"/>
</dbReference>
<dbReference type="HAMAP" id="MF_00078">
    <property type="entry name" value="PMDh_S"/>
    <property type="match status" value="1"/>
</dbReference>
<dbReference type="InterPro" id="IPR012016">
    <property type="entry name" value="PMDh-S-like"/>
</dbReference>
<dbReference type="InterPro" id="IPR002840">
    <property type="entry name" value="PMDh-S-like_dom"/>
</dbReference>
<dbReference type="InterPro" id="IPR020794">
    <property type="entry name" value="PMDh_S"/>
</dbReference>
<dbReference type="NCBIfam" id="NF003046">
    <property type="entry name" value="PRK03955.1"/>
    <property type="match status" value="1"/>
</dbReference>
<dbReference type="PANTHER" id="PTHR36577">
    <property type="entry name" value="DUF521 DOMAIN PROTEIN (AFU_ORTHOLOGUE AFUA_6G00490)"/>
    <property type="match status" value="1"/>
</dbReference>
<dbReference type="PANTHER" id="PTHR36577:SF3">
    <property type="entry name" value="DUF521 DOMAIN PROTEIN (AFU_ORTHOLOGUE AFUA_6G00490)"/>
    <property type="match status" value="1"/>
</dbReference>
<dbReference type="Pfam" id="PF01989">
    <property type="entry name" value="AcnX_swivel_put"/>
    <property type="match status" value="1"/>
</dbReference>
<dbReference type="PIRSF" id="PIRSF004966">
    <property type="entry name" value="UCP004966"/>
    <property type="match status" value="1"/>
</dbReference>
<dbReference type="SUPFAM" id="SSF52016">
    <property type="entry name" value="LeuD/IlvD-like"/>
    <property type="match status" value="1"/>
</dbReference>
<accession>Q9UY93</accession>
<accession>G8ZJW9</accession>
<reference key="1">
    <citation type="journal article" date="2003" name="Mol. Microbiol.">
        <title>An integrated analysis of the genome of the hyperthermophilic archaeon Pyrococcus abyssi.</title>
        <authorList>
            <person name="Cohen G.N."/>
            <person name="Barbe V."/>
            <person name="Flament D."/>
            <person name="Galperin M."/>
            <person name="Heilig R."/>
            <person name="Lecompte O."/>
            <person name="Poch O."/>
            <person name="Prieur D."/>
            <person name="Querellou J."/>
            <person name="Ripp R."/>
            <person name="Thierry J.-C."/>
            <person name="Van der Oost J."/>
            <person name="Weissenbach J."/>
            <person name="Zivanovic Y."/>
            <person name="Forterre P."/>
        </authorList>
    </citation>
    <scope>NUCLEOTIDE SEQUENCE [LARGE SCALE GENOMIC DNA]</scope>
    <source>
        <strain>GE5 / Orsay</strain>
    </source>
</reference>
<reference key="2">
    <citation type="journal article" date="2012" name="Curr. Microbiol.">
        <title>Re-annotation of two hyperthermophilic archaea Pyrococcus abyssi GE5 and Pyrococcus furiosus DSM 3638.</title>
        <authorList>
            <person name="Gao J."/>
            <person name="Wang J."/>
        </authorList>
    </citation>
    <scope>GENOME REANNOTATION</scope>
    <source>
        <strain>GE5 / Orsay</strain>
    </source>
</reference>
<organism>
    <name type="scientific">Pyrococcus abyssi (strain GE5 / Orsay)</name>
    <dbReference type="NCBI Taxonomy" id="272844"/>
    <lineage>
        <taxon>Archaea</taxon>
        <taxon>Methanobacteriati</taxon>
        <taxon>Methanobacteriota</taxon>
        <taxon>Thermococci</taxon>
        <taxon>Thermococcales</taxon>
        <taxon>Thermococcaceae</taxon>
        <taxon>Pyrococcus</taxon>
    </lineage>
</organism>
<evidence type="ECO:0000255" key="1">
    <source>
        <dbReference type="HAMAP-Rule" id="MF_00078"/>
    </source>
</evidence>
<name>PMDHS_PYRAB</name>
<feature type="chain" id="PRO_0000152569" description="Phosphomevalonate dehydratase small subunit">
    <location>
        <begin position="1"/>
        <end position="130"/>
    </location>
</feature>
<feature type="active site" description="Proton acceptor" evidence="1">
    <location>
        <position position="62"/>
    </location>
</feature>
<comment type="function">
    <text evidence="1">Component of a hydro-lyase that catalyzes the dehydration of mevalonate 5-phosphate (MVA5P) to form trans-anhydromevalonate 5-phosphate (tAHMP). Involved in the archaeal mevalonate (MVA) pathway, which provides fundamental precursors for isoprenoid biosynthesis, such as isopentenyl diphosphate (IPP) and dimethylallyl diphosphate (DMAPP).</text>
</comment>
<comment type="catalytic activity">
    <reaction evidence="1">
        <text>(R)-5-phosphomevalonate = (2E)-3-methyl-5-phosphooxypent-2-enoate + H2O</text>
        <dbReference type="Rhea" id="RHEA:78975"/>
        <dbReference type="ChEBI" id="CHEBI:15377"/>
        <dbReference type="ChEBI" id="CHEBI:58146"/>
        <dbReference type="ChEBI" id="CHEBI:229665"/>
        <dbReference type="EC" id="4.2.1.182"/>
    </reaction>
    <physiologicalReaction direction="left-to-right" evidence="1">
        <dbReference type="Rhea" id="RHEA:78976"/>
    </physiologicalReaction>
</comment>
<comment type="pathway">
    <text evidence="1">Isoprenoid biosynthesis; isopentenyl diphosphate biosynthesis via mevalonate pathway.</text>
</comment>
<comment type="subunit">
    <text evidence="1">Heterodimer composed of a large subunit (PMDh-L) and a small subunit (PMDh-S).</text>
</comment>
<comment type="similarity">
    <text evidence="1">Belongs to the AcnX type II small subunit family.</text>
</comment>
<gene>
    <name type="ordered locus">PYRAB16150</name>
    <name type="ORF">PAB1062</name>
</gene>
<keyword id="KW-0414">Isoprene biosynthesis</keyword>
<keyword id="KW-0456">Lyase</keyword>